<reference key="1">
    <citation type="journal article" date="2004" name="Nature">
        <title>Genome sequence of Silicibacter pomeroyi reveals adaptations to the marine environment.</title>
        <authorList>
            <person name="Moran M.A."/>
            <person name="Buchan A."/>
            <person name="Gonzalez J.M."/>
            <person name="Heidelberg J.F."/>
            <person name="Whitman W.B."/>
            <person name="Kiene R.P."/>
            <person name="Henriksen J.R."/>
            <person name="King G.M."/>
            <person name="Belas R."/>
            <person name="Fuqua C."/>
            <person name="Brinkac L.M."/>
            <person name="Lewis M."/>
            <person name="Johri S."/>
            <person name="Weaver B."/>
            <person name="Pai G."/>
            <person name="Eisen J.A."/>
            <person name="Rahe E."/>
            <person name="Sheldon W.M."/>
            <person name="Ye W."/>
            <person name="Miller T.R."/>
            <person name="Carlton J."/>
            <person name="Rasko D.A."/>
            <person name="Paulsen I.T."/>
            <person name="Ren Q."/>
            <person name="Daugherty S.C."/>
            <person name="DeBoy R.T."/>
            <person name="Dodson R.J."/>
            <person name="Durkin A.S."/>
            <person name="Madupu R."/>
            <person name="Nelson W.C."/>
            <person name="Sullivan S.A."/>
            <person name="Rosovitz M.J."/>
            <person name="Haft D.H."/>
            <person name="Selengut J."/>
            <person name="Ward N."/>
        </authorList>
    </citation>
    <scope>NUCLEOTIDE SEQUENCE [LARGE SCALE GENOMIC DNA]</scope>
    <source>
        <strain>ATCC 700808 / DSM 15171 / DSS-3</strain>
    </source>
</reference>
<reference key="2">
    <citation type="journal article" date="2014" name="Stand. Genomic Sci.">
        <title>An updated genome annotation for the model marine bacterium Ruegeria pomeroyi DSS-3.</title>
        <authorList>
            <person name="Rivers A.R."/>
            <person name="Smith C.B."/>
            <person name="Moran M.A."/>
        </authorList>
    </citation>
    <scope>GENOME REANNOTATION</scope>
    <source>
        <strain>ATCC 700808 / DSM 15171 / DSS-3</strain>
    </source>
</reference>
<comment type="similarity">
    <text evidence="1">Belongs to the UPF0262 family.</text>
</comment>
<proteinExistence type="inferred from homology"/>
<accession>Q5LLF5</accession>
<feature type="chain" id="PRO_0000314217" description="UPF0262 protein SPOA0072">
    <location>
        <begin position="1"/>
        <end position="161"/>
    </location>
</feature>
<feature type="region of interest" description="Disordered" evidence="2">
    <location>
        <begin position="1"/>
        <end position="21"/>
    </location>
</feature>
<geneLocation type="plasmid">
    <name>megaplasmid Spo</name>
</geneLocation>
<protein>
    <recommendedName>
        <fullName evidence="1">UPF0262 protein SPOA0072</fullName>
    </recommendedName>
</protein>
<dbReference type="EMBL" id="CP000032">
    <property type="protein sequence ID" value="AAV97212.1"/>
    <property type="molecule type" value="Genomic_DNA"/>
</dbReference>
<dbReference type="PaxDb" id="246200-SPOA0072"/>
<dbReference type="KEGG" id="sil:SPOA0072"/>
<dbReference type="eggNOG" id="COG5328">
    <property type="taxonomic scope" value="Bacteria"/>
</dbReference>
<dbReference type="HOGENOM" id="CLU_112904_0_0_5"/>
<dbReference type="Proteomes" id="UP000001023">
    <property type="component" value="Plasmid megaplasmid"/>
</dbReference>
<dbReference type="HAMAP" id="MF_00678">
    <property type="entry name" value="UPF0262"/>
    <property type="match status" value="1"/>
</dbReference>
<dbReference type="InterPro" id="IPR008321">
    <property type="entry name" value="UCP032146"/>
</dbReference>
<dbReference type="NCBIfam" id="NF002769">
    <property type="entry name" value="PRK02853.1"/>
    <property type="match status" value="1"/>
</dbReference>
<dbReference type="Pfam" id="PF06793">
    <property type="entry name" value="UPF0262"/>
    <property type="match status" value="1"/>
</dbReference>
<dbReference type="PIRSF" id="PIRSF032146">
    <property type="entry name" value="UCP032146"/>
    <property type="match status" value="1"/>
</dbReference>
<organism>
    <name type="scientific">Ruegeria pomeroyi (strain ATCC 700808 / DSM 15171 / DSS-3)</name>
    <name type="common">Silicibacter pomeroyi</name>
    <dbReference type="NCBI Taxonomy" id="246200"/>
    <lineage>
        <taxon>Bacteria</taxon>
        <taxon>Pseudomonadati</taxon>
        <taxon>Pseudomonadota</taxon>
        <taxon>Alphaproteobacteria</taxon>
        <taxon>Rhodobacterales</taxon>
        <taxon>Roseobacteraceae</taxon>
        <taxon>Ruegeria</taxon>
    </lineage>
</organism>
<name>Y4072_RUEPO</name>
<keyword id="KW-0614">Plasmid</keyword>
<keyword id="KW-1185">Reference proteome</keyword>
<gene>
    <name type="ordered locus">SPOA0072</name>
</gene>
<evidence type="ECO:0000255" key="1">
    <source>
        <dbReference type="HAMAP-Rule" id="MF_00678"/>
    </source>
</evidence>
<evidence type="ECO:0000256" key="2">
    <source>
        <dbReference type="SAM" id="MobiDB-lite"/>
    </source>
</evidence>
<sequence length="161" mass="18475">MTMSRISHIELDDSNLPPPTPEIEQERKVAIYDLLEENSFALPARDDRAVPEGPYRVNLSIRDKRLVFDIQTEDEEKAAEFHLSLGPFRQVVKDYFQICESYFNAVKTLPPSQIETIDMARRGIHNEGSRVLQERLDGKAEIDTDTARRLFTLICVLHFGG</sequence>